<dbReference type="EC" id="2.3.2.34" evidence="2"/>
<dbReference type="EMBL" id="BC021792">
    <property type="protein sequence ID" value="AAH21792.1"/>
    <property type="molecule type" value="mRNA"/>
</dbReference>
<dbReference type="CCDS" id="CCDS20825.1"/>
<dbReference type="RefSeq" id="NP_663553.1">
    <property type="nucleotide sequence ID" value="NM_145578.3"/>
</dbReference>
<dbReference type="SMR" id="P61082"/>
<dbReference type="BioGRID" id="204404">
    <property type="interactions" value="10"/>
</dbReference>
<dbReference type="FunCoup" id="P61082">
    <property type="interactions" value="3250"/>
</dbReference>
<dbReference type="IntAct" id="P61082">
    <property type="interactions" value="1"/>
</dbReference>
<dbReference type="MINT" id="P61082"/>
<dbReference type="STRING" id="10090.ENSMUSP00000005714"/>
<dbReference type="GlyGen" id="P61082">
    <property type="glycosylation" value="1 site, 1 O-linked glycan (1 site)"/>
</dbReference>
<dbReference type="iPTMnet" id="P61082"/>
<dbReference type="PhosphoSitePlus" id="P61082"/>
<dbReference type="SwissPalm" id="P61082"/>
<dbReference type="REPRODUCTION-2DPAGE" id="IPI00169448"/>
<dbReference type="REPRODUCTION-2DPAGE" id="P61082"/>
<dbReference type="jPOST" id="P61082"/>
<dbReference type="PaxDb" id="10090-ENSMUSP00000005714"/>
<dbReference type="PeptideAtlas" id="P61082"/>
<dbReference type="ProteomicsDB" id="298445"/>
<dbReference type="Pumba" id="P61082"/>
<dbReference type="Antibodypedia" id="3333">
    <property type="antibodies" value="206 antibodies from 34 providers"/>
</dbReference>
<dbReference type="DNASU" id="22192"/>
<dbReference type="Ensembl" id="ENSMUST00000005714.14">
    <property type="protein sequence ID" value="ENSMUSP00000005714.8"/>
    <property type="gene ID" value="ENSMUSG00000005575.17"/>
</dbReference>
<dbReference type="GeneID" id="22192"/>
<dbReference type="KEGG" id="mmu:22192"/>
<dbReference type="UCSC" id="uc009ffd.2">
    <property type="organism name" value="mouse"/>
</dbReference>
<dbReference type="AGR" id="MGI:108278"/>
<dbReference type="CTD" id="9040"/>
<dbReference type="MGI" id="MGI:108278">
    <property type="gene designation" value="Ube2m"/>
</dbReference>
<dbReference type="VEuPathDB" id="HostDB:ENSMUSG00000005575"/>
<dbReference type="eggNOG" id="KOG0420">
    <property type="taxonomic scope" value="Eukaryota"/>
</dbReference>
<dbReference type="GeneTree" id="ENSGT00940000162814"/>
<dbReference type="HOGENOM" id="CLU_030988_6_0_1"/>
<dbReference type="InParanoid" id="P61082"/>
<dbReference type="OMA" id="CQVDFPD"/>
<dbReference type="OrthoDB" id="10249039at2759"/>
<dbReference type="PhylomeDB" id="P61082"/>
<dbReference type="TreeFam" id="TF101125"/>
<dbReference type="Reactome" id="R-MMU-2173789">
    <property type="pathway name" value="TGF-beta receptor signaling activates SMADs"/>
</dbReference>
<dbReference type="Reactome" id="R-MMU-5607761">
    <property type="pathway name" value="Dectin-1 mediated noncanonical NF-kB signaling"/>
</dbReference>
<dbReference type="Reactome" id="R-MMU-5676590">
    <property type="pathway name" value="NIK--&gt;noncanonical NF-kB signaling"/>
</dbReference>
<dbReference type="Reactome" id="R-MMU-8951664">
    <property type="pathway name" value="Neddylation"/>
</dbReference>
<dbReference type="Reactome" id="R-MMU-983168">
    <property type="pathway name" value="Antigen processing: Ubiquitination &amp; Proteasome degradation"/>
</dbReference>
<dbReference type="UniPathway" id="UPA00885"/>
<dbReference type="BioGRID-ORCS" id="22192">
    <property type="hits" value="32 hits in 76 CRISPR screens"/>
</dbReference>
<dbReference type="ChiTaRS" id="Ube2m">
    <property type="organism name" value="mouse"/>
</dbReference>
<dbReference type="PRO" id="PR:P61082"/>
<dbReference type="Proteomes" id="UP000000589">
    <property type="component" value="Chromosome 7"/>
</dbReference>
<dbReference type="RNAct" id="P61082">
    <property type="molecule type" value="protein"/>
</dbReference>
<dbReference type="Bgee" id="ENSMUSG00000005575">
    <property type="expression patterns" value="Expressed in superior frontal gyrus and 255 other cell types or tissues"/>
</dbReference>
<dbReference type="ExpressionAtlas" id="P61082">
    <property type="expression patterns" value="baseline and differential"/>
</dbReference>
<dbReference type="GO" id="GO:0098978">
    <property type="term" value="C:glutamatergic synapse"/>
    <property type="evidence" value="ECO:0000314"/>
    <property type="project" value="SynGO"/>
</dbReference>
<dbReference type="GO" id="GO:0098794">
    <property type="term" value="C:postsynapse"/>
    <property type="evidence" value="ECO:0000314"/>
    <property type="project" value="SynGO"/>
</dbReference>
<dbReference type="GO" id="GO:0098793">
    <property type="term" value="C:presynapse"/>
    <property type="evidence" value="ECO:0000314"/>
    <property type="project" value="SynGO"/>
</dbReference>
<dbReference type="GO" id="GO:0005524">
    <property type="term" value="F:ATP binding"/>
    <property type="evidence" value="ECO:0007669"/>
    <property type="project" value="UniProtKB-KW"/>
</dbReference>
<dbReference type="GO" id="GO:0061654">
    <property type="term" value="F:NEDD8 conjugating enzyme activity"/>
    <property type="evidence" value="ECO:0007669"/>
    <property type="project" value="UniProtKB-EC"/>
</dbReference>
<dbReference type="GO" id="GO:0019788">
    <property type="term" value="F:NEDD8 transferase activity"/>
    <property type="evidence" value="ECO:0000250"/>
    <property type="project" value="UniProtKB"/>
</dbReference>
<dbReference type="GO" id="GO:0004842">
    <property type="term" value="F:ubiquitin-protein transferase activity"/>
    <property type="evidence" value="ECO:0000250"/>
    <property type="project" value="UniProtKB"/>
</dbReference>
<dbReference type="GO" id="GO:0036211">
    <property type="term" value="P:protein modification process"/>
    <property type="evidence" value="ECO:0000250"/>
    <property type="project" value="UniProtKB"/>
</dbReference>
<dbReference type="GO" id="GO:0045116">
    <property type="term" value="P:protein neddylation"/>
    <property type="evidence" value="ECO:0000250"/>
    <property type="project" value="UniProtKB"/>
</dbReference>
<dbReference type="GO" id="GO:0150052">
    <property type="term" value="P:regulation of postsynapse assembly"/>
    <property type="evidence" value="ECO:0000314"/>
    <property type="project" value="SynGO"/>
</dbReference>
<dbReference type="CDD" id="cd23794">
    <property type="entry name" value="UBCc_UBE2F_UBE2M"/>
    <property type="match status" value="1"/>
</dbReference>
<dbReference type="FunFam" id="3.10.110.10:FF:000239">
    <property type="entry name" value="NEDD8-conjugating enzyme Ubc12"/>
    <property type="match status" value="1"/>
</dbReference>
<dbReference type="Gene3D" id="3.10.110.10">
    <property type="entry name" value="Ubiquitin Conjugating Enzyme"/>
    <property type="match status" value="1"/>
</dbReference>
<dbReference type="InterPro" id="IPR050113">
    <property type="entry name" value="Ub_conjugating_enzyme"/>
</dbReference>
<dbReference type="InterPro" id="IPR000608">
    <property type="entry name" value="UBQ-conjugat_E2_core"/>
</dbReference>
<dbReference type="InterPro" id="IPR023313">
    <property type="entry name" value="UBQ-conjugating_AS"/>
</dbReference>
<dbReference type="InterPro" id="IPR016135">
    <property type="entry name" value="UBQ-conjugating_enzyme/RWD"/>
</dbReference>
<dbReference type="PANTHER" id="PTHR24067">
    <property type="entry name" value="UBIQUITIN-CONJUGATING ENZYME E2"/>
    <property type="match status" value="1"/>
</dbReference>
<dbReference type="Pfam" id="PF00179">
    <property type="entry name" value="UQ_con"/>
    <property type="match status" value="1"/>
</dbReference>
<dbReference type="SMART" id="SM00212">
    <property type="entry name" value="UBCc"/>
    <property type="match status" value="1"/>
</dbReference>
<dbReference type="SUPFAM" id="SSF54495">
    <property type="entry name" value="UBC-like"/>
    <property type="match status" value="1"/>
</dbReference>
<dbReference type="PROSITE" id="PS00183">
    <property type="entry name" value="UBC_1"/>
    <property type="match status" value="1"/>
</dbReference>
<dbReference type="PROSITE" id="PS50127">
    <property type="entry name" value="UBC_2"/>
    <property type="match status" value="1"/>
</dbReference>
<protein>
    <recommendedName>
        <fullName>NEDD8-conjugating enzyme Ubc12</fullName>
        <ecNumber evidence="2">2.3.2.34</ecNumber>
    </recommendedName>
    <alternativeName>
        <fullName>NEDD8 carrier protein</fullName>
    </alternativeName>
    <alternativeName>
        <fullName>Ubiquitin-conjugating enzyme E2 M</fullName>
    </alternativeName>
</protein>
<sequence length="183" mass="20900">MIKLFSLKQQKKEEESAGGTKGSSKKASAAQLRIQKDINELNLPKTCDISFSDPDDLLNFKLVICPDEGFYKSGKFVFSFKVGQGYPHDPPKVKCETMVYHPNIDLEGNVCLNILREDWKPVLTINSIIYGLQYLFLEPNPEDPLNKEAAEVLQNNRRLFEQNVQRSMRGGYIGSTYFERCLK</sequence>
<gene>
    <name type="primary">Ube2m</name>
    <name type="synonym">Ubc-rs2</name>
    <name type="synonym">Ubc12</name>
</gene>
<reference key="1">
    <citation type="journal article" date="2004" name="Genome Res.">
        <title>The status, quality, and expansion of the NIH full-length cDNA project: the Mammalian Gene Collection (MGC).</title>
        <authorList>
            <consortium name="The MGC Project Team"/>
        </authorList>
    </citation>
    <scope>NUCLEOTIDE SEQUENCE [LARGE SCALE MRNA]</scope>
    <source>
        <tissue>Kidney</tissue>
    </source>
</reference>
<reference key="2">
    <citation type="journal article" date="2010" name="Cell">
        <title>A tissue-specific atlas of mouse protein phosphorylation and expression.</title>
        <authorList>
            <person name="Huttlin E.L."/>
            <person name="Jedrychowski M.P."/>
            <person name="Elias J.E."/>
            <person name="Goswami T."/>
            <person name="Rad R."/>
            <person name="Beausoleil S.A."/>
            <person name="Villen J."/>
            <person name="Haas W."/>
            <person name="Sowa M.E."/>
            <person name="Gygi S.P."/>
        </authorList>
    </citation>
    <scope>IDENTIFICATION BY MASS SPECTROMETRY [LARGE SCALE ANALYSIS]</scope>
    <source>
        <tissue>Brain</tissue>
        <tissue>Brown adipose tissue</tissue>
        <tissue>Heart</tissue>
        <tissue>Kidney</tissue>
        <tissue>Liver</tissue>
        <tissue>Lung</tissue>
        <tissue>Pancreas</tissue>
        <tissue>Spleen</tissue>
        <tissue>Testis</tissue>
    </source>
</reference>
<reference key="3">
    <citation type="journal article" date="2014" name="Mol. Cell. Proteomics">
        <title>Immunoaffinity enrichment and mass spectrometry analysis of protein methylation.</title>
        <authorList>
            <person name="Guo A."/>
            <person name="Gu H."/>
            <person name="Zhou J."/>
            <person name="Mulhern D."/>
            <person name="Wang Y."/>
            <person name="Lee K.A."/>
            <person name="Yang V."/>
            <person name="Aguiar M."/>
            <person name="Kornhauser J."/>
            <person name="Jia X."/>
            <person name="Ren J."/>
            <person name="Beausoleil S.A."/>
            <person name="Silva J.C."/>
            <person name="Vemulapalli V."/>
            <person name="Bedford M.T."/>
            <person name="Comb M.J."/>
        </authorList>
    </citation>
    <scope>METHYLATION [LARGE SCALE ANALYSIS] AT ARG-169</scope>
    <scope>IDENTIFICATION BY MASS SPECTROMETRY [LARGE SCALE ANALYSIS]</scope>
    <source>
        <tissue>Brain</tissue>
        <tissue>Embryo</tissue>
    </source>
</reference>
<accession>P61082</accession>
<accession>O76069</accession>
<accession>Q8VC50</accession>
<proteinExistence type="evidence at protein level"/>
<feature type="chain" id="PRO_0000082489" description="NEDD8-conjugating enzyme Ubc12">
    <location>
        <begin position="1"/>
        <end position="183"/>
    </location>
</feature>
<feature type="domain" description="UBC core" evidence="3">
    <location>
        <begin position="29"/>
        <end position="173"/>
    </location>
</feature>
<feature type="region of interest" description="Interaction with UBA3" evidence="1">
    <location>
        <begin position="1"/>
        <end position="57"/>
    </location>
</feature>
<feature type="region of interest" description="Disordered" evidence="5">
    <location>
        <begin position="1"/>
        <end position="29"/>
    </location>
</feature>
<feature type="active site" description="Glycyl thioester intermediate" evidence="3 4">
    <location>
        <position position="111"/>
    </location>
</feature>
<feature type="modified residue" description="N-acetylmethionine" evidence="2">
    <location>
        <position position="1"/>
    </location>
</feature>
<feature type="modified residue" description="N6-acetyllysine" evidence="2">
    <location>
        <position position="3"/>
    </location>
</feature>
<feature type="modified residue" description="Phosphoserine" evidence="2">
    <location>
        <position position="50"/>
    </location>
</feature>
<feature type="modified residue" description="Asymmetric dimethylarginine; alternate" evidence="6">
    <location>
        <position position="169"/>
    </location>
</feature>
<feature type="modified residue" description="Omega-N-methylarginine; alternate" evidence="6">
    <location>
        <position position="169"/>
    </location>
</feature>
<name>UBC12_MOUSE</name>
<comment type="function">
    <text evidence="2">Accepts the ubiquitin-like protein NEDD8 from the UBA3-NAE1 E1 complex and catalyzes its covalent attachment to other proteins. The specific interaction with the E3 ubiquitin ligase RBX1, but not RBX2, suggests that the RBX1-UBE2M complex neddylates specific target proteins, such as CUL1, CUL2, CUL3 and CUL4. Involved in cell proliferation.</text>
</comment>
<comment type="catalytic activity">
    <reaction evidence="2">
        <text>[E1 NEDD8-activating enzyme]-S-[NEDD8 protein]-yl-L-cysteine + [E2 NEDD8-conjugating enzyme]-L-cysteine = [E1 NEDD8-activating enzyme]-L-cysteine + [E2 NEDD8-conjugating enzyme]-S-[NEDD8-protein]-yl-L-cysteine.</text>
        <dbReference type="EC" id="2.3.2.34"/>
    </reaction>
</comment>
<comment type="pathway">
    <text>Protein modification; protein neddylation.</text>
</comment>
<comment type="subunit">
    <text evidence="2">Interacts with UBA3 and RBX1. Interacts (N-terminally acetylated form) with (via DCUN1 domain) DCUN1D1, DCUN1D2, DCUN1D3, DCUN1D4 and DCUN1D5.</text>
</comment>
<comment type="domain">
    <text evidence="1">Both the N-terminal docking peptide and the catalytic core domain must bind the UBA3-NAE1 complex simultaneously for optimal transfer of NEDD8.</text>
</comment>
<comment type="PTM">
    <text evidence="1">The acetylation of Met-1 increases affinity for DCUN1D1 by about 2 orders of magnitude and is crucial for NEDD8 transfer to cullins.</text>
</comment>
<comment type="similarity">
    <text evidence="3">Belongs to the ubiquitin-conjugating enzyme family. UBC12 subfamily.</text>
</comment>
<evidence type="ECO:0000250" key="1"/>
<evidence type="ECO:0000250" key="2">
    <source>
        <dbReference type="UniProtKB" id="P61081"/>
    </source>
</evidence>
<evidence type="ECO:0000255" key="3">
    <source>
        <dbReference type="PROSITE-ProRule" id="PRU00388"/>
    </source>
</evidence>
<evidence type="ECO:0000255" key="4">
    <source>
        <dbReference type="PROSITE-ProRule" id="PRU10133"/>
    </source>
</evidence>
<evidence type="ECO:0000256" key="5">
    <source>
        <dbReference type="SAM" id="MobiDB-lite"/>
    </source>
</evidence>
<evidence type="ECO:0007744" key="6">
    <source>
    </source>
</evidence>
<organism>
    <name type="scientific">Mus musculus</name>
    <name type="common">Mouse</name>
    <dbReference type="NCBI Taxonomy" id="10090"/>
    <lineage>
        <taxon>Eukaryota</taxon>
        <taxon>Metazoa</taxon>
        <taxon>Chordata</taxon>
        <taxon>Craniata</taxon>
        <taxon>Vertebrata</taxon>
        <taxon>Euteleostomi</taxon>
        <taxon>Mammalia</taxon>
        <taxon>Eutheria</taxon>
        <taxon>Euarchontoglires</taxon>
        <taxon>Glires</taxon>
        <taxon>Rodentia</taxon>
        <taxon>Myomorpha</taxon>
        <taxon>Muroidea</taxon>
        <taxon>Muridae</taxon>
        <taxon>Murinae</taxon>
        <taxon>Mus</taxon>
        <taxon>Mus</taxon>
    </lineage>
</organism>
<keyword id="KW-0007">Acetylation</keyword>
<keyword id="KW-0067">ATP-binding</keyword>
<keyword id="KW-0488">Methylation</keyword>
<keyword id="KW-0547">Nucleotide-binding</keyword>
<keyword id="KW-0597">Phosphoprotein</keyword>
<keyword id="KW-1185">Reference proteome</keyword>
<keyword id="KW-0808">Transferase</keyword>
<keyword id="KW-0833">Ubl conjugation pathway</keyword>